<feature type="initiator methionine" description="Removed" evidence="2">
    <location>
        <position position="1"/>
    </location>
</feature>
<feature type="chain" id="PRO_0000351153" description="Major tail sheath protein" evidence="2">
    <location>
        <begin position="2"/>
        <end position="393"/>
    </location>
</feature>
<evidence type="ECO:0000250" key="1">
    <source>
        <dbReference type="UniProtKB" id="P22501"/>
    </source>
</evidence>
<evidence type="ECO:0000269" key="2">
    <source>
    </source>
</evidence>
<evidence type="ECO:0000303" key="3">
    <source>
    </source>
</evidence>
<evidence type="ECO:0000305" key="4"/>
<evidence type="ECO:0000312" key="5">
    <source>
        <dbReference type="EMBL" id="BAH15156.1"/>
    </source>
</evidence>
<protein>
    <recommendedName>
        <fullName evidence="1">Major tail sheath protein</fullName>
    </recommendedName>
    <alternativeName>
        <fullName evidence="3">Virion protein A</fullName>
    </alternativeName>
</protein>
<dbReference type="EMBL" id="AB452988">
    <property type="protein sequence ID" value="BAH15156.1"/>
    <property type="molecule type" value="Genomic_DNA"/>
</dbReference>
<dbReference type="SMR" id="P85993"/>
<dbReference type="GO" id="GO:0098027">
    <property type="term" value="C:virus tail, sheath"/>
    <property type="evidence" value="ECO:0007669"/>
    <property type="project" value="UniProtKB-KW"/>
</dbReference>
<dbReference type="GO" id="GO:0099000">
    <property type="term" value="P:symbiont genome ejection through host cell envelope, contractile tail mechanism"/>
    <property type="evidence" value="ECO:0007669"/>
    <property type="project" value="UniProtKB-KW"/>
</dbReference>
<dbReference type="InterPro" id="IPR054564">
    <property type="entry name" value="Gp18_domIII_N"/>
</dbReference>
<dbReference type="InterPro" id="IPR035089">
    <property type="entry name" value="Phage_sheath_subtilisin"/>
</dbReference>
<dbReference type="InterPro" id="IPR052042">
    <property type="entry name" value="Phage_Tail_Sheath_Structural"/>
</dbReference>
<dbReference type="InterPro" id="IPR020287">
    <property type="entry name" value="Tail_sheath_C"/>
</dbReference>
<dbReference type="PANTHER" id="PTHR35861">
    <property type="match status" value="1"/>
</dbReference>
<dbReference type="PANTHER" id="PTHR35861:SF1">
    <property type="entry name" value="PHAGE TAIL SHEATH PROTEIN"/>
    <property type="match status" value="1"/>
</dbReference>
<dbReference type="Pfam" id="PF22671">
    <property type="entry name" value="Gp18_domIII_N"/>
    <property type="match status" value="1"/>
</dbReference>
<dbReference type="Pfam" id="PF04984">
    <property type="entry name" value="Phage_sheath_1"/>
    <property type="match status" value="1"/>
</dbReference>
<dbReference type="Pfam" id="PF17482">
    <property type="entry name" value="Phage_sheath_1C"/>
    <property type="match status" value="1"/>
</dbReference>
<reference evidence="4 5" key="1">
    <citation type="journal article" date="2009" name="FEMS Microbiol. Lett.">
        <title>Morphological and genetic analysis of three bacteriophages of Serratia marcescens isolated from environmental water.</title>
        <authorList>
            <person name="Matsushita K."/>
            <person name="Uchiyama J."/>
            <person name="Kato S."/>
            <person name="Ujihara T."/>
            <person name="Hoshiba H."/>
            <person name="Sugihara S."/>
            <person name="Muraoka A."/>
            <person name="Wakiguchi H."/>
            <person name="Matsuzaki S."/>
        </authorList>
    </citation>
    <scope>NUCLEOTIDE SEQUENCE [GENOMIC DNA]</scope>
    <scope>PROTEIN SEQUENCE OF 2-21</scope>
</reference>
<proteinExistence type="evidence at protein level"/>
<organism>
    <name type="scientific">Serratia phage KSP20</name>
    <name type="common">Serratia marcescens bacteriophage KSP20</name>
    <dbReference type="NCBI Taxonomy" id="552527"/>
    <lineage>
        <taxon>Viruses</taxon>
        <taxon>Duplodnaviria</taxon>
        <taxon>Heunggongvirae</taxon>
        <taxon>Uroviricota</taxon>
        <taxon>Caudoviricetes</taxon>
        <taxon>Peduoviridae</taxon>
    </lineage>
</organism>
<name>TSP_BPSK2</name>
<accession>P85993</accession>
<accession>B9A7B0</accession>
<comment type="function">
    <text evidence="1">Forms the virus contractile tail sheath.</text>
</comment>
<comment type="subcellular location">
    <subcellularLocation>
        <location evidence="2">Virion</location>
    </subcellularLocation>
</comment>
<comment type="similarity">
    <text evidence="4">Belongs to the myoviridae tail sheath protein family.</text>
</comment>
<sequence length="393" mass="42798">MTDNFFHGARVKENTDLQTAINDVDSTVIGLVAVADDADATTFPLDTPVLITRVISVLGKAGKTGSLYKSLKAISDQVSTRVIVVRVAAAGTEDGAKTQSQLIIGGSQADGSYTGMFALLTAEQKVGYRPRILGVPMYDTQEVTAQLRVIAKQLRAFSYSYCDGCETIAEAKTYREQFAEREGMLIWPNFIAYNSVSGENEEFPAVAYALGLRAKIDNEQGWHKSLSNVAVSNVLGITKDVFWALQAEDSDANELNANEVTTLIKRDGFRFWGNRTTDKDEYIFEVYTRTAQILADTIAEAQFTTVDSPLTPANVKDVVSGINAKLQGLVTAGRLIGAACWFDIVDNPKTSIPQGKAVVRYNYSPVPPLEDLTMIQTFTDQYYEAAFASLGGA</sequence>
<organismHost>
    <name type="scientific">Serratia marcescens</name>
    <dbReference type="NCBI Taxonomy" id="615"/>
</organismHost>
<keyword id="KW-0903">Direct protein sequencing</keyword>
<keyword id="KW-1242">Viral contractile tail ejection system</keyword>
<keyword id="KW-1171">Viral genome ejection through host cell envelope</keyword>
<keyword id="KW-1162">Viral penetration into host cytoplasm</keyword>
<keyword id="KW-1227">Viral tail protein</keyword>
<keyword id="KW-1229">Viral tail sheath protein</keyword>
<keyword id="KW-0946">Virion</keyword>
<keyword id="KW-1160">Virus entry into host cell</keyword>